<dbReference type="EC" id="3.5.1.88" evidence="1"/>
<dbReference type="EMBL" id="CP001364">
    <property type="protein sequence ID" value="ACM54719.1"/>
    <property type="molecule type" value="Genomic_DNA"/>
</dbReference>
<dbReference type="SMR" id="B9LBS4"/>
<dbReference type="KEGG" id="chl:Chy400_3342"/>
<dbReference type="HOGENOM" id="CLU_061901_2_0_0"/>
<dbReference type="OrthoDB" id="9784988at2"/>
<dbReference type="GO" id="GO:0046872">
    <property type="term" value="F:metal ion binding"/>
    <property type="evidence" value="ECO:0007669"/>
    <property type="project" value="UniProtKB-KW"/>
</dbReference>
<dbReference type="GO" id="GO:0042586">
    <property type="term" value="F:peptide deformylase activity"/>
    <property type="evidence" value="ECO:0007669"/>
    <property type="project" value="UniProtKB-UniRule"/>
</dbReference>
<dbReference type="GO" id="GO:0043686">
    <property type="term" value="P:co-translational protein modification"/>
    <property type="evidence" value="ECO:0007669"/>
    <property type="project" value="TreeGrafter"/>
</dbReference>
<dbReference type="GO" id="GO:0006412">
    <property type="term" value="P:translation"/>
    <property type="evidence" value="ECO:0007669"/>
    <property type="project" value="UniProtKB-UniRule"/>
</dbReference>
<dbReference type="CDD" id="cd00487">
    <property type="entry name" value="Pep_deformylase"/>
    <property type="match status" value="1"/>
</dbReference>
<dbReference type="FunFam" id="3.90.45.10:FF:000018">
    <property type="entry name" value="Peptide deformylase"/>
    <property type="match status" value="1"/>
</dbReference>
<dbReference type="Gene3D" id="3.90.45.10">
    <property type="entry name" value="Peptide deformylase"/>
    <property type="match status" value="1"/>
</dbReference>
<dbReference type="HAMAP" id="MF_00163">
    <property type="entry name" value="Pep_deformylase"/>
    <property type="match status" value="1"/>
</dbReference>
<dbReference type="InterPro" id="IPR023635">
    <property type="entry name" value="Peptide_deformylase"/>
</dbReference>
<dbReference type="InterPro" id="IPR036821">
    <property type="entry name" value="Peptide_deformylase_sf"/>
</dbReference>
<dbReference type="NCBIfam" id="TIGR00079">
    <property type="entry name" value="pept_deformyl"/>
    <property type="match status" value="1"/>
</dbReference>
<dbReference type="NCBIfam" id="NF001159">
    <property type="entry name" value="PRK00150.1-3"/>
    <property type="match status" value="1"/>
</dbReference>
<dbReference type="PANTHER" id="PTHR10458">
    <property type="entry name" value="PEPTIDE DEFORMYLASE"/>
    <property type="match status" value="1"/>
</dbReference>
<dbReference type="PANTHER" id="PTHR10458:SF22">
    <property type="entry name" value="PEPTIDE DEFORMYLASE"/>
    <property type="match status" value="1"/>
</dbReference>
<dbReference type="Pfam" id="PF01327">
    <property type="entry name" value="Pep_deformylase"/>
    <property type="match status" value="1"/>
</dbReference>
<dbReference type="PIRSF" id="PIRSF004749">
    <property type="entry name" value="Pep_def"/>
    <property type="match status" value="1"/>
</dbReference>
<dbReference type="PRINTS" id="PR01576">
    <property type="entry name" value="PDEFORMYLASE"/>
</dbReference>
<dbReference type="SUPFAM" id="SSF56420">
    <property type="entry name" value="Peptide deformylase"/>
    <property type="match status" value="1"/>
</dbReference>
<keyword id="KW-0378">Hydrolase</keyword>
<keyword id="KW-0408">Iron</keyword>
<keyword id="KW-0479">Metal-binding</keyword>
<keyword id="KW-0648">Protein biosynthesis</keyword>
<proteinExistence type="inferred from homology"/>
<name>DEF_CHLSY</name>
<accession>B9LBS4</accession>
<feature type="chain" id="PRO_1000200721" description="Peptide deformylase">
    <location>
        <begin position="1"/>
        <end position="188"/>
    </location>
</feature>
<feature type="active site" evidence="1">
    <location>
        <position position="153"/>
    </location>
</feature>
<feature type="binding site" evidence="1">
    <location>
        <position position="109"/>
    </location>
    <ligand>
        <name>Fe cation</name>
        <dbReference type="ChEBI" id="CHEBI:24875"/>
    </ligand>
</feature>
<feature type="binding site" evidence="1">
    <location>
        <position position="152"/>
    </location>
    <ligand>
        <name>Fe cation</name>
        <dbReference type="ChEBI" id="CHEBI:24875"/>
    </ligand>
</feature>
<feature type="binding site" evidence="1">
    <location>
        <position position="156"/>
    </location>
    <ligand>
        <name>Fe cation</name>
        <dbReference type="ChEBI" id="CHEBI:24875"/>
    </ligand>
</feature>
<comment type="function">
    <text evidence="1">Removes the formyl group from the N-terminal Met of newly synthesized proteins. Requires at least a dipeptide for an efficient rate of reaction. N-terminal L-methionine is a prerequisite for activity but the enzyme has broad specificity at other positions.</text>
</comment>
<comment type="catalytic activity">
    <reaction evidence="1">
        <text>N-terminal N-formyl-L-methionyl-[peptide] + H2O = N-terminal L-methionyl-[peptide] + formate</text>
        <dbReference type="Rhea" id="RHEA:24420"/>
        <dbReference type="Rhea" id="RHEA-COMP:10639"/>
        <dbReference type="Rhea" id="RHEA-COMP:10640"/>
        <dbReference type="ChEBI" id="CHEBI:15377"/>
        <dbReference type="ChEBI" id="CHEBI:15740"/>
        <dbReference type="ChEBI" id="CHEBI:49298"/>
        <dbReference type="ChEBI" id="CHEBI:64731"/>
        <dbReference type="EC" id="3.5.1.88"/>
    </reaction>
</comment>
<comment type="cofactor">
    <cofactor evidence="1">
        <name>Fe(2+)</name>
        <dbReference type="ChEBI" id="CHEBI:29033"/>
    </cofactor>
    <text evidence="1">Binds 1 Fe(2+) ion.</text>
</comment>
<comment type="similarity">
    <text evidence="1">Belongs to the polypeptide deformylase family.</text>
</comment>
<protein>
    <recommendedName>
        <fullName evidence="1">Peptide deformylase</fullName>
        <shortName evidence="1">PDF</shortName>
        <ecNumber evidence="1">3.5.1.88</ecNumber>
    </recommendedName>
    <alternativeName>
        <fullName evidence="1">Polypeptide deformylase</fullName>
    </alternativeName>
</protein>
<evidence type="ECO:0000255" key="1">
    <source>
        <dbReference type="HAMAP-Rule" id="MF_00163"/>
    </source>
</evidence>
<reference key="1">
    <citation type="submission" date="2009-01" db="EMBL/GenBank/DDBJ databases">
        <title>Complete sequence of Chloroflexus sp. Y-400-fl.</title>
        <authorList>
            <consortium name="US DOE Joint Genome Institute"/>
            <person name="Lucas S."/>
            <person name="Copeland A."/>
            <person name="Lapidus A."/>
            <person name="Glavina del Rio T."/>
            <person name="Dalin E."/>
            <person name="Tice H."/>
            <person name="Bruce D."/>
            <person name="Goodwin L."/>
            <person name="Pitluck S."/>
            <person name="Sims D."/>
            <person name="Kiss H."/>
            <person name="Brettin T."/>
            <person name="Detter J.C."/>
            <person name="Han C."/>
            <person name="Larimer F."/>
            <person name="Land M."/>
            <person name="Hauser L."/>
            <person name="Kyrpides N."/>
            <person name="Ovchinnikova G."/>
            <person name="Bryant D.A."/>
            <person name="Richardson P."/>
        </authorList>
    </citation>
    <scope>NUCLEOTIDE SEQUENCE [LARGE SCALE GENOMIC DNA]</scope>
    <source>
        <strain>ATCC 29364 / DSM 637 / Y-400-fl</strain>
    </source>
</reference>
<organism>
    <name type="scientific">Chloroflexus aurantiacus (strain ATCC 29364 / DSM 637 / Y-400-fl)</name>
    <dbReference type="NCBI Taxonomy" id="480224"/>
    <lineage>
        <taxon>Bacteria</taxon>
        <taxon>Bacillati</taxon>
        <taxon>Chloroflexota</taxon>
        <taxon>Chloroflexia</taxon>
        <taxon>Chloroflexales</taxon>
        <taxon>Chloroflexineae</taxon>
        <taxon>Chloroflexaceae</taxon>
        <taxon>Chloroflexus</taxon>
    </lineage>
</organism>
<sequence length="188" mass="21394">MAIRRILRIDDAEDRKILKMQCRPVKLPDRNLKQLVADMFETMRAAHGVGLAAPQIGIPIQLCIIEIPAEYEERADGSVVEVAPAEPYVLINPRIVKMSGEEVMRDEGCLSLPGWYGMVPRQTWVTVEFQDLNGKHHRLRRAGDLLGWAIQHEVDHLNGILFTERIRDLSTLRDITKERDAQPVDQAP</sequence>
<gene>
    <name evidence="1" type="primary">def</name>
    <name type="ordered locus">Chy400_3342</name>
</gene>